<name>FABY_PSEAE</name>
<accession>Q9HU15</accession>
<gene>
    <name type="primary">fabY</name>
    <name type="ordered locus">PA5174</name>
</gene>
<protein>
    <recommendedName>
        <fullName evidence="5">Beta-ketoacyl-[acyl-carrier-protein] synthase FabY</fullName>
        <shortName evidence="5">Beta-ketoacyl-ACP synthase</shortName>
        <shortName evidence="5">KAS</shortName>
        <ecNumber evidence="2">2.3.1.180</ecNumber>
    </recommendedName>
    <alternativeName>
        <fullName evidence="5">Beta-ketoacyl synthase KAS I/II domain-containing enzyme</fullName>
    </alternativeName>
</protein>
<keyword id="KW-0002">3D-structure</keyword>
<keyword id="KW-0012">Acyltransferase</keyword>
<keyword id="KW-0275">Fatty acid biosynthesis</keyword>
<keyword id="KW-0276">Fatty acid metabolism</keyword>
<keyword id="KW-0444">Lipid biosynthesis</keyword>
<keyword id="KW-0443">Lipid metabolism</keyword>
<keyword id="KW-1185">Reference proteome</keyword>
<keyword id="KW-0808">Transferase</keyword>
<reference key="1">
    <citation type="journal article" date="2000" name="Nature">
        <title>Complete genome sequence of Pseudomonas aeruginosa PAO1, an opportunistic pathogen.</title>
        <authorList>
            <person name="Stover C.K."/>
            <person name="Pham X.-Q.T."/>
            <person name="Erwin A.L."/>
            <person name="Mizoguchi S.D."/>
            <person name="Warrener P."/>
            <person name="Hickey M.J."/>
            <person name="Brinkman F.S.L."/>
            <person name="Hufnagle W.O."/>
            <person name="Kowalik D.J."/>
            <person name="Lagrou M."/>
            <person name="Garber R.L."/>
            <person name="Goltry L."/>
            <person name="Tolentino E."/>
            <person name="Westbrock-Wadman S."/>
            <person name="Yuan Y."/>
            <person name="Brody L.L."/>
            <person name="Coulter S.N."/>
            <person name="Folger K.R."/>
            <person name="Kas A."/>
            <person name="Larbig K."/>
            <person name="Lim R.M."/>
            <person name="Smith K.A."/>
            <person name="Spencer D.H."/>
            <person name="Wong G.K.-S."/>
            <person name="Wu Z."/>
            <person name="Paulsen I.T."/>
            <person name="Reizer J."/>
            <person name="Saier M.H. Jr."/>
            <person name="Hancock R.E.W."/>
            <person name="Lory S."/>
            <person name="Olson M.V."/>
        </authorList>
    </citation>
    <scope>NUCLEOTIDE SEQUENCE [LARGE SCALE GENOMIC DNA]</scope>
    <source>
        <strain>ATCC 15692 / DSM 22644 / CIP 104116 / JCM 14847 / LMG 12228 / 1C / PRS 101 / PAO1</strain>
    </source>
</reference>
<reference key="2">
    <citation type="journal article" date="2012" name="J. Bacteriol.">
        <title>Fatty acid biosynthesis in Pseudomonas aeruginosa is initiated by the FabY class of beta-ketoacyl acyl carrier protein synthases.</title>
        <authorList>
            <person name="Yuan Y."/>
            <person name="Sachdeva M."/>
            <person name="Leeds J.A."/>
            <person name="Meredith T.C."/>
        </authorList>
    </citation>
    <scope>FUNCTION</scope>
    <scope>CATALYTIC ACTIVITY</scope>
    <scope>DISRUPTION PHENOTYPE</scope>
    <scope>SUBSTRATE SPECIFICITY</scope>
    <source>
        <strain>ATCC 15692 / DSM 22644 / CIP 104116 / JCM 14847 / LMG 12228 / 1C / PRS 101 / PAO1</strain>
    </source>
</reference>
<reference key="3">
    <citation type="journal article" date="2014" name="Antimicrob. Agents Chemother.">
        <title>Deletion of the beta-acetoacetyl synthase FabY in Pseudomonas aeruginosa induces hypoacylation of lipopolysaccharide and increases antimicrobial susceptibility.</title>
        <authorList>
            <person name="Six D.A."/>
            <person name="Yuan Y."/>
            <person name="Leeds J.A."/>
            <person name="Meredith T.C."/>
        </authorList>
    </citation>
    <scope>FUNCTION</scope>
    <scope>DISRUPTION PHENOTYPE</scope>
    <source>
        <strain>ATCC 15692 / DSM 22644 / CIP 104116 / JCM 14847 / LMG 12228 / 1C / PRS 101 / PAO1</strain>
    </source>
</reference>
<reference key="4">
    <citation type="journal article" date="2014" name="Structure">
        <title>Evolutionary origins of the multienzyme architecture of giant fungal fatty acid synthase.</title>
        <authorList>
            <person name="Bukhari H.S."/>
            <person name="Jakob R.P."/>
            <person name="Maier T."/>
        </authorList>
    </citation>
    <scope>X-RAY CRYSTALLOGRAPHY (1.35 ANGSTROMS)</scope>
    <scope>SUBUNIT</scope>
    <source>
        <strain>ATCC 15692 / DSM 22644 / CIP 104116 / JCM 14847 / LMG 12228 / 1C / PRS 101 / PAO1</strain>
    </source>
</reference>
<sequence>MSRLPVIVGFGGYNAAGRSSFHHGFRRMVIESMDPQARQETLAGLAVMMKLVKAEGGRYLAEDGTPLSPEDIERRYAERIFASTLVRRIEPQYLDPDAVHWHKVLELSPAEGQALTFKASPKQLPEPLPANWSIAPAEDGEVLVSIHERCEFKVDSYRALTVKSAGQLPTGFEPGELYNSRFHPRGLQMSVVAATDAIRSTGIDWKTIVDNVQPDEIAVFSGSIMSQLDDNGFGGLMQSRLKGHRVSAKQLPLGFNSMPTDFINAYVLGSVGMTGSITGACATFLYNLQKGIDVITSGQARVVIVGNSEAPILPECIEGYSAMGALATEEGLRLIEGRDDVDFRRASRPFGENCGFTLAESSQYVVLMDDELALRLGADIHGAVTDVFINADGFKKSISAPGPGNYLTVAKAVASAVQIVGLDTVRHASFVHAHGSSTPANRVTESEILDRVASAFGIDGWPVTAVKAYVGHSLATASADQLISALGTFKYGILPGIKTIDKVADDVHQQRLSISNRDMRQDKPLEVCFINSKGFGGNNASGVVLSPRIAEKMLRKRHGQAAFAAYVEKREQTRAAARAYDQRALQGDLEIIYNFGQDLIDEHAIEVSAEQVTVPGFSQPLVYKKDARFSDMLD</sequence>
<feature type="chain" id="PRO_0000433484" description="Beta-ketoacyl-[acyl-carrier-protein] synthase FabY">
    <location>
        <begin position="1"/>
        <end position="634"/>
    </location>
</feature>
<feature type="domain" description="Ketosynthase family 3 (KS3)" evidence="1">
    <location>
        <begin position="78"/>
        <end position="546"/>
    </location>
</feature>
<feature type="active site" description="For beta-ketoacyl synthase activity" evidence="1 8">
    <location>
        <position position="281"/>
    </location>
</feature>
<feature type="active site" description="For beta-ketoacyl synthase activity" evidence="1">
    <location>
        <position position="434"/>
    </location>
</feature>
<feature type="active site" description="For beta-ketoacyl synthase activity" evidence="1">
    <location>
        <position position="472"/>
    </location>
</feature>
<feature type="strand" evidence="9">
    <location>
        <begin position="5"/>
        <end position="14"/>
    </location>
</feature>
<feature type="helix" evidence="9">
    <location>
        <begin position="20"/>
        <end position="22"/>
    </location>
</feature>
<feature type="helix" evidence="9">
    <location>
        <begin position="23"/>
        <end position="28"/>
    </location>
</feature>
<feature type="helix" evidence="9">
    <location>
        <begin position="30"/>
        <end position="32"/>
    </location>
</feature>
<feature type="helix" evidence="9">
    <location>
        <begin position="35"/>
        <end position="48"/>
    </location>
</feature>
<feature type="strand" evidence="9">
    <location>
        <begin position="51"/>
        <end position="55"/>
    </location>
</feature>
<feature type="strand" evidence="9">
    <location>
        <begin position="58"/>
        <end position="60"/>
    </location>
</feature>
<feature type="helix" evidence="9">
    <location>
        <begin position="69"/>
        <end position="82"/>
    </location>
</feature>
<feature type="strand" evidence="9">
    <location>
        <begin position="84"/>
        <end position="88"/>
    </location>
</feature>
<feature type="turn" evidence="9">
    <location>
        <begin position="91"/>
        <end position="93"/>
    </location>
</feature>
<feature type="strand" evidence="9">
    <location>
        <begin position="99"/>
        <end position="107"/>
    </location>
</feature>
<feature type="strand" evidence="9">
    <location>
        <begin position="111"/>
        <end position="113"/>
    </location>
</feature>
<feature type="strand" evidence="9">
    <location>
        <begin position="115"/>
        <end position="119"/>
    </location>
</feature>
<feature type="helix" evidence="9">
    <location>
        <begin position="121"/>
        <end position="123"/>
    </location>
</feature>
<feature type="strand" evidence="9">
    <location>
        <begin position="133"/>
        <end position="136"/>
    </location>
</feature>
<feature type="strand" evidence="9">
    <location>
        <begin position="142"/>
        <end position="146"/>
    </location>
</feature>
<feature type="strand" evidence="9">
    <location>
        <begin position="150"/>
        <end position="158"/>
    </location>
</feature>
<feature type="strand" evidence="9">
    <location>
        <begin position="164"/>
        <end position="166"/>
    </location>
</feature>
<feature type="helix" evidence="9">
    <location>
        <begin position="174"/>
        <end position="177"/>
    </location>
</feature>
<feature type="helix" evidence="9">
    <location>
        <begin position="185"/>
        <end position="199"/>
    </location>
</feature>
<feature type="helix" evidence="9">
    <location>
        <begin position="205"/>
        <end position="210"/>
    </location>
</feature>
<feature type="helix" evidence="9">
    <location>
        <begin position="214"/>
        <end position="216"/>
    </location>
</feature>
<feature type="strand" evidence="9">
    <location>
        <begin position="217"/>
        <end position="220"/>
    </location>
</feature>
<feature type="turn" evidence="9">
    <location>
        <begin position="230"/>
        <end position="232"/>
    </location>
</feature>
<feature type="helix" evidence="9">
    <location>
        <begin position="233"/>
        <end position="238"/>
    </location>
</feature>
<feature type="helix" evidence="9">
    <location>
        <begin position="240"/>
        <end position="242"/>
    </location>
</feature>
<feature type="helix" evidence="9">
    <location>
        <begin position="250"/>
        <end position="254"/>
    </location>
</feature>
<feature type="helix" evidence="9">
    <location>
        <begin position="258"/>
        <end position="266"/>
    </location>
</feature>
<feature type="strand" evidence="9">
    <location>
        <begin position="272"/>
        <end position="275"/>
    </location>
</feature>
<feature type="helix" evidence="9">
    <location>
        <begin position="280"/>
        <end position="282"/>
    </location>
</feature>
<feature type="helix" evidence="9">
    <location>
        <begin position="283"/>
        <end position="296"/>
    </location>
</feature>
<feature type="strand" evidence="9">
    <location>
        <begin position="301"/>
        <end position="309"/>
    </location>
</feature>
<feature type="helix" evidence="9">
    <location>
        <begin position="314"/>
        <end position="322"/>
    </location>
</feature>
<feature type="helix" evidence="9">
    <location>
        <begin position="329"/>
        <end position="336"/>
    </location>
</feature>
<feature type="strand" evidence="9">
    <location>
        <begin position="338"/>
        <end position="340"/>
    </location>
</feature>
<feature type="helix" evidence="9">
    <location>
        <begin position="343"/>
        <end position="345"/>
    </location>
</feature>
<feature type="strand" evidence="9">
    <location>
        <begin position="361"/>
        <end position="369"/>
    </location>
</feature>
<feature type="helix" evidence="9">
    <location>
        <begin position="370"/>
        <end position="376"/>
    </location>
</feature>
<feature type="strand" evidence="9">
    <location>
        <begin position="381"/>
        <end position="389"/>
    </location>
</feature>
<feature type="helix" evidence="9">
    <location>
        <begin position="404"/>
        <end position="420"/>
    </location>
</feature>
<feature type="helix" evidence="9">
    <location>
        <begin position="422"/>
        <end position="428"/>
    </location>
</feature>
<feature type="strand" evidence="9">
    <location>
        <begin position="429"/>
        <end position="432"/>
    </location>
</feature>
<feature type="helix" evidence="9">
    <location>
        <begin position="439"/>
        <end position="456"/>
    </location>
</feature>
<feature type="strand" evidence="9">
    <location>
        <begin position="460"/>
        <end position="464"/>
    </location>
</feature>
<feature type="helix" evidence="9">
    <location>
        <begin position="467"/>
        <end position="470"/>
    </location>
</feature>
<feature type="helix" evidence="9">
    <location>
        <begin position="474"/>
        <end position="476"/>
    </location>
</feature>
<feature type="helix" evidence="9">
    <location>
        <begin position="477"/>
        <end position="491"/>
    </location>
</feature>
<feature type="strand" evidence="9">
    <location>
        <begin position="512"/>
        <end position="514"/>
    </location>
</feature>
<feature type="strand" evidence="9">
    <location>
        <begin position="527"/>
        <end position="534"/>
    </location>
</feature>
<feature type="turn" evidence="9">
    <location>
        <begin position="535"/>
        <end position="537"/>
    </location>
</feature>
<feature type="strand" evidence="9">
    <location>
        <begin position="538"/>
        <end position="545"/>
    </location>
</feature>
<feature type="helix" evidence="9">
    <location>
        <begin position="547"/>
        <end position="558"/>
    </location>
</feature>
<feature type="helix" evidence="9">
    <location>
        <begin position="560"/>
        <end position="585"/>
    </location>
</feature>
<feature type="helix" evidence="9">
    <location>
        <begin position="602"/>
        <end position="604"/>
    </location>
</feature>
<feature type="strand" evidence="9">
    <location>
        <begin position="609"/>
        <end position="613"/>
    </location>
</feature>
<feature type="helix" evidence="9">
    <location>
        <begin position="630"/>
        <end position="632"/>
    </location>
</feature>
<evidence type="ECO:0000255" key="1">
    <source>
        <dbReference type="PROSITE-ProRule" id="PRU01348"/>
    </source>
</evidence>
<evidence type="ECO:0000269" key="2">
    <source>
    </source>
</evidence>
<evidence type="ECO:0000269" key="3">
    <source>
    </source>
</evidence>
<evidence type="ECO:0000269" key="4">
    <source>
    </source>
</evidence>
<evidence type="ECO:0000303" key="5">
    <source>
    </source>
</evidence>
<evidence type="ECO:0000305" key="6"/>
<evidence type="ECO:0000305" key="7">
    <source>
    </source>
</evidence>
<evidence type="ECO:0000305" key="8">
    <source>
    </source>
</evidence>
<evidence type="ECO:0007829" key="9">
    <source>
        <dbReference type="PDB" id="4CW4"/>
    </source>
</evidence>
<organism>
    <name type="scientific">Pseudomonas aeruginosa (strain ATCC 15692 / DSM 22644 / CIP 104116 / JCM 14847 / LMG 12228 / 1C / PRS 101 / PAO1)</name>
    <dbReference type="NCBI Taxonomy" id="208964"/>
    <lineage>
        <taxon>Bacteria</taxon>
        <taxon>Pseudomonadati</taxon>
        <taxon>Pseudomonadota</taxon>
        <taxon>Gammaproteobacteria</taxon>
        <taxon>Pseudomonadales</taxon>
        <taxon>Pseudomonadaceae</taxon>
        <taxon>Pseudomonas</taxon>
    </lineage>
</organism>
<dbReference type="EC" id="2.3.1.180" evidence="2"/>
<dbReference type="EMBL" id="AE004091">
    <property type="protein sequence ID" value="AAG08559.1"/>
    <property type="molecule type" value="Genomic_DNA"/>
</dbReference>
<dbReference type="PIR" id="E82999">
    <property type="entry name" value="E82999"/>
</dbReference>
<dbReference type="RefSeq" id="NP_253861.1">
    <property type="nucleotide sequence ID" value="NC_002516.2"/>
</dbReference>
<dbReference type="RefSeq" id="WP_003114068.1">
    <property type="nucleotide sequence ID" value="NZ_QZGE01000002.1"/>
</dbReference>
<dbReference type="PDB" id="4CW4">
    <property type="method" value="X-ray"/>
    <property type="resolution" value="1.35 A"/>
    <property type="chains" value="A=1-634"/>
</dbReference>
<dbReference type="PDBsum" id="4CW4"/>
<dbReference type="SMR" id="Q9HU15"/>
<dbReference type="DIP" id="DIP-61329N"/>
<dbReference type="STRING" id="208964.PA5174"/>
<dbReference type="PaxDb" id="208964-PA5174"/>
<dbReference type="GeneID" id="881783"/>
<dbReference type="KEGG" id="pae:PA5174"/>
<dbReference type="PATRIC" id="fig|208964.12.peg.5422"/>
<dbReference type="PseudoCAP" id="PA5174"/>
<dbReference type="HOGENOM" id="CLU_030172_0_0_6"/>
<dbReference type="InParanoid" id="Q9HU15"/>
<dbReference type="OrthoDB" id="9784825at2"/>
<dbReference type="PhylomeDB" id="Q9HU15"/>
<dbReference type="BioCyc" id="MetaCyc:MONOMER-17580"/>
<dbReference type="BioCyc" id="PAER208964:G1FZ6-5291-MONOMER"/>
<dbReference type="UniPathway" id="UPA00094"/>
<dbReference type="EvolutionaryTrace" id="Q9HU15"/>
<dbReference type="Proteomes" id="UP000002438">
    <property type="component" value="Chromosome"/>
</dbReference>
<dbReference type="GO" id="GO:0005829">
    <property type="term" value="C:cytosol"/>
    <property type="evidence" value="ECO:0000318"/>
    <property type="project" value="GO_Central"/>
</dbReference>
<dbReference type="GO" id="GO:0016020">
    <property type="term" value="C:membrane"/>
    <property type="evidence" value="ECO:0007669"/>
    <property type="project" value="GOC"/>
</dbReference>
<dbReference type="GO" id="GO:0004315">
    <property type="term" value="F:3-oxoacyl-[acyl-carrier-protein] synthase activity"/>
    <property type="evidence" value="ECO:0000318"/>
    <property type="project" value="GO_Central"/>
</dbReference>
<dbReference type="GO" id="GO:0033818">
    <property type="term" value="F:beta-ketoacyl-acyl-carrier-protein synthase III activity"/>
    <property type="evidence" value="ECO:0000314"/>
    <property type="project" value="CACAO"/>
</dbReference>
<dbReference type="GO" id="GO:0006633">
    <property type="term" value="P:fatty acid biosynthetic process"/>
    <property type="evidence" value="ECO:0000315"/>
    <property type="project" value="CACAO"/>
</dbReference>
<dbReference type="GO" id="GO:0009245">
    <property type="term" value="P:lipid A biosynthetic process"/>
    <property type="evidence" value="ECO:0000315"/>
    <property type="project" value="CACAO"/>
</dbReference>
<dbReference type="GO" id="GO:0009372">
    <property type="term" value="P:quorum sensing"/>
    <property type="evidence" value="ECO:0000315"/>
    <property type="project" value="CACAO"/>
</dbReference>
<dbReference type="GO" id="GO:0019290">
    <property type="term" value="P:siderophore biosynthetic process"/>
    <property type="evidence" value="ECO:0000315"/>
    <property type="project" value="CACAO"/>
</dbReference>
<dbReference type="CDD" id="cd00828">
    <property type="entry name" value="elong_cond_enzymes"/>
    <property type="match status" value="1"/>
</dbReference>
<dbReference type="Gene3D" id="3.40.47.10">
    <property type="match status" value="1"/>
</dbReference>
<dbReference type="InterPro" id="IPR000794">
    <property type="entry name" value="Beta-ketoacyl_synthase"/>
</dbReference>
<dbReference type="InterPro" id="IPR047224">
    <property type="entry name" value="FAS_alpha_su_C"/>
</dbReference>
<dbReference type="InterPro" id="IPR014031">
    <property type="entry name" value="Ketoacyl_synth_C"/>
</dbReference>
<dbReference type="InterPro" id="IPR014030">
    <property type="entry name" value="Ketoacyl_synth_N"/>
</dbReference>
<dbReference type="InterPro" id="IPR020841">
    <property type="entry name" value="PKS_Beta-ketoAc_synthase_dom"/>
</dbReference>
<dbReference type="InterPro" id="IPR016039">
    <property type="entry name" value="Thiolase-like"/>
</dbReference>
<dbReference type="PANTHER" id="PTHR11712:SF336">
    <property type="entry name" value="3-OXOACYL-[ACYL-CARRIER-PROTEIN] SYNTHASE, MITOCHONDRIAL"/>
    <property type="match status" value="1"/>
</dbReference>
<dbReference type="PANTHER" id="PTHR11712">
    <property type="entry name" value="POLYKETIDE SYNTHASE-RELATED"/>
    <property type="match status" value="1"/>
</dbReference>
<dbReference type="Pfam" id="PF00109">
    <property type="entry name" value="ketoacyl-synt"/>
    <property type="match status" value="1"/>
</dbReference>
<dbReference type="Pfam" id="PF02801">
    <property type="entry name" value="Ketoacyl-synt_C"/>
    <property type="match status" value="1"/>
</dbReference>
<dbReference type="SMART" id="SM00825">
    <property type="entry name" value="PKS_KS"/>
    <property type="match status" value="1"/>
</dbReference>
<dbReference type="SUPFAM" id="SSF53901">
    <property type="entry name" value="Thiolase-like"/>
    <property type="match status" value="2"/>
</dbReference>
<dbReference type="PROSITE" id="PS52004">
    <property type="entry name" value="KS3_2"/>
    <property type="match status" value="1"/>
</dbReference>
<comment type="function">
    <text evidence="2 3">Involved in the initiation of the fatty acid biosynthesis. Catalyzes the condensation of acetyl coenzyme A (acetyl-CoA) with malonyl-acyl carrier protein (ACP) to make the fatty acid synthesis (FAS) primer beta-acetoacetyl-ACP. It can also use short-chain acyl-CoA as substrates, including butyryl-CoA, and hexanoyl-CoA, but does not use any of the longer chain acyl-CoA substrates.</text>
</comment>
<comment type="catalytic activity">
    <reaction evidence="2">
        <text>malonyl-[ACP] + acetyl-CoA + H(+) = 3-oxobutanoyl-[ACP] + CO2 + CoA</text>
        <dbReference type="Rhea" id="RHEA:12080"/>
        <dbReference type="Rhea" id="RHEA-COMP:9623"/>
        <dbReference type="Rhea" id="RHEA-COMP:9625"/>
        <dbReference type="ChEBI" id="CHEBI:15378"/>
        <dbReference type="ChEBI" id="CHEBI:16526"/>
        <dbReference type="ChEBI" id="CHEBI:57287"/>
        <dbReference type="ChEBI" id="CHEBI:57288"/>
        <dbReference type="ChEBI" id="CHEBI:78449"/>
        <dbReference type="ChEBI" id="CHEBI:78450"/>
        <dbReference type="EC" id="2.3.1.180"/>
    </reaction>
</comment>
<comment type="pathway">
    <text evidence="7">Lipid metabolism; fatty acid biosynthesis.</text>
</comment>
<comment type="subunit">
    <text evidence="4">Homodimer.</text>
</comment>
<comment type="disruption phenotype">
    <text evidence="2 3">Cells lacking this gene show an attenuated growth due to a defect in de novo fatty acid biosynthesis. Siderophore secretion and quorum-sensing signaling, particularly in the rhl and Pseudomonas quinolone signal (PQS) systems, is significantly muted in the absence of fabY (PubMed:22753059). In vitro, the deletion of fabY results in an increased susceptibility to a number of antibiotics, including vancomycin and cephalosporins. The antibiotic susceptibility is influenced by changes in membrane lipid composition which lack a single secondary lauroyl group, resulting in hypoacylated lipid A (PubMed:24145528).</text>
</comment>
<comment type="miscellaneous">
    <text evidence="7">FabY is a FabB/F homolog that functions as a FabH.</text>
</comment>
<comment type="similarity">
    <text evidence="6">Belongs to the thiolase-like superfamily. Beta-ketoacyl-ACP synthases family.</text>
</comment>
<proteinExistence type="evidence at protein level"/>